<comment type="function">
    <text evidence="1">Component of the Mediator complex, a coactivator involved in the regulated transcription of nearly all RNA polymerase II-dependent genes. Mediator functions as a bridge to convey information from gene-specific regulatory proteins to the basal RNA polymerase II transcription machinery. Mediator is recruited to promoters by direct interactions with regulatory proteins and serves as a scaffold for the assembly of a functional preinitiation complex with RNA polymerase II and the general transcription factors (By similarity).</text>
</comment>
<comment type="subunit">
    <text evidence="1">Component of the Mediator complex.</text>
</comment>
<comment type="subcellular location">
    <subcellularLocation>
        <location evidence="1">Nucleus</location>
    </subcellularLocation>
</comment>
<comment type="similarity">
    <text evidence="2">Belongs to the Mediator complex subunit 20 family.</text>
</comment>
<organism>
    <name type="scientific">Scheffersomyces stipitis (strain ATCC 58785 / CBS 6054 / NBRC 10063 / NRRL Y-11545)</name>
    <name type="common">Yeast</name>
    <name type="synonym">Pichia stipitis</name>
    <dbReference type="NCBI Taxonomy" id="322104"/>
    <lineage>
        <taxon>Eukaryota</taxon>
        <taxon>Fungi</taxon>
        <taxon>Dikarya</taxon>
        <taxon>Ascomycota</taxon>
        <taxon>Saccharomycotina</taxon>
        <taxon>Pichiomycetes</taxon>
        <taxon>Debaryomycetaceae</taxon>
        <taxon>Scheffersomyces</taxon>
    </lineage>
</organism>
<keyword id="KW-0010">Activator</keyword>
<keyword id="KW-0539">Nucleus</keyword>
<keyword id="KW-1185">Reference proteome</keyword>
<keyword id="KW-0804">Transcription</keyword>
<keyword id="KW-0805">Transcription regulation</keyword>
<name>MED20_PICST</name>
<feature type="chain" id="PRO_0000308567" description="Mediator of RNA polymerase II transcription subunit 20">
    <location>
        <begin position="1"/>
        <end position="237"/>
    </location>
</feature>
<accession>A3GGE8</accession>
<protein>
    <recommendedName>
        <fullName>Mediator of RNA polymerase II transcription subunit 20</fullName>
    </recommendedName>
    <alternativeName>
        <fullName>Mediator complex subunit 20</fullName>
    </alternativeName>
</protein>
<proteinExistence type="inferred from homology"/>
<gene>
    <name type="primary">SRB2</name>
    <name type="synonym">MED20</name>
    <name type="ORF">PICST_34349</name>
</gene>
<evidence type="ECO:0000250" key="1"/>
<evidence type="ECO:0000305" key="2"/>
<reference key="1">
    <citation type="journal article" date="2007" name="Nat. Biotechnol.">
        <title>Genome sequence of the lignocellulose-bioconverting and xylose-fermenting yeast Pichia stipitis.</title>
        <authorList>
            <person name="Jeffries T.W."/>
            <person name="Grigoriev I.V."/>
            <person name="Grimwood J."/>
            <person name="Laplaza J.M."/>
            <person name="Aerts A."/>
            <person name="Salamov A."/>
            <person name="Schmutz J."/>
            <person name="Lindquist E."/>
            <person name="Dehal P."/>
            <person name="Shapiro H."/>
            <person name="Jin Y.-S."/>
            <person name="Passoth V."/>
            <person name="Richardson P.M."/>
        </authorList>
    </citation>
    <scope>NUCLEOTIDE SEQUENCE [LARGE SCALE GENOMIC DNA]</scope>
    <source>
        <strain>ATCC 58785 / CBS 6054 / NBRC 10063 / NRRL Y-11545</strain>
    </source>
</reference>
<dbReference type="EMBL" id="AAVQ01000001">
    <property type="protein sequence ID" value="EAZ63508.1"/>
    <property type="molecule type" value="Genomic_DNA"/>
</dbReference>
<dbReference type="RefSeq" id="XP_001387531.1">
    <property type="nucleotide sequence ID" value="XM_001387494.1"/>
</dbReference>
<dbReference type="SMR" id="A3GGE8"/>
<dbReference type="FunCoup" id="A3GGE8">
    <property type="interactions" value="251"/>
</dbReference>
<dbReference type="STRING" id="322104.A3GGE8"/>
<dbReference type="GeneID" id="4851347"/>
<dbReference type="KEGG" id="pic:PICST_34349"/>
<dbReference type="eggNOG" id="ENOG502RXMU">
    <property type="taxonomic scope" value="Eukaryota"/>
</dbReference>
<dbReference type="HOGENOM" id="CLU_065844_0_0_1"/>
<dbReference type="InParanoid" id="A3GGE8"/>
<dbReference type="OMA" id="WTQRQSI"/>
<dbReference type="OrthoDB" id="1854899at2759"/>
<dbReference type="Proteomes" id="UP000002258">
    <property type="component" value="Chromosome 1"/>
</dbReference>
<dbReference type="GO" id="GO:0016592">
    <property type="term" value="C:mediator complex"/>
    <property type="evidence" value="ECO:0007669"/>
    <property type="project" value="InterPro"/>
</dbReference>
<dbReference type="GO" id="GO:0003712">
    <property type="term" value="F:transcription coregulator activity"/>
    <property type="evidence" value="ECO:0007669"/>
    <property type="project" value="InterPro"/>
</dbReference>
<dbReference type="GO" id="GO:0006357">
    <property type="term" value="P:regulation of transcription by RNA polymerase II"/>
    <property type="evidence" value="ECO:0007669"/>
    <property type="project" value="InterPro"/>
</dbReference>
<dbReference type="Gene3D" id="3.30.310.180">
    <property type="match status" value="2"/>
</dbReference>
<dbReference type="InterPro" id="IPR013921">
    <property type="entry name" value="Mediator_Med20"/>
</dbReference>
<dbReference type="Pfam" id="PF08612">
    <property type="entry name" value="Med20"/>
    <property type="match status" value="1"/>
</dbReference>
<sequence>MVSAVLLIQKATPETITQFHDQLSNELPTLRGKWNFNFKIFRNNPYSIPQELAETATVAPESKWLYTLSPSYLSDSSISLINGKSVGVFTNLIKEEAGEHGHSVELSIPNSHLHKGATTDLNDPFDFFVAQKLQSLWTQRQLIRGDGGRIYELENGNLTIRTSNVFLHGNFRGLLVQIEINQNLCNVDDVSSFASTFETIRNKYGIPAGDLSCEVLDPKRLDTYADLIYQYSKILNF</sequence>